<organism>
    <name type="scientific">Nicotiana plumbaginifolia</name>
    <name type="common">Leadwort-leaved tobacco</name>
    <name type="synonym">Tex-Mex tobacco</name>
    <dbReference type="NCBI Taxonomy" id="4092"/>
    <lineage>
        <taxon>Eukaryota</taxon>
        <taxon>Viridiplantae</taxon>
        <taxon>Streptophyta</taxon>
        <taxon>Embryophyta</taxon>
        <taxon>Tracheophyta</taxon>
        <taxon>Spermatophyta</taxon>
        <taxon>Magnoliopsida</taxon>
        <taxon>eudicotyledons</taxon>
        <taxon>Gunneridae</taxon>
        <taxon>Pentapetalae</taxon>
        <taxon>asterids</taxon>
        <taxon>lamiids</taxon>
        <taxon>Solanales</taxon>
        <taxon>Solanaceae</taxon>
        <taxon>Nicotianoideae</taxon>
        <taxon>Nicotianeae</taxon>
        <taxon>Nicotiana</taxon>
    </lineage>
</organism>
<gene>
    <name type="primary">PMA3</name>
</gene>
<evidence type="ECO:0000250" key="1"/>
<evidence type="ECO:0000255" key="2"/>
<evidence type="ECO:0000305" key="3"/>
<evidence type="ECO:0007829" key="4">
    <source>
        <dbReference type="PDB" id="2O98"/>
    </source>
</evidence>
<dbReference type="EC" id="7.1.2.1"/>
<dbReference type="EMBL" id="M80490">
    <property type="protein sequence ID" value="AAA34098.1"/>
    <property type="molecule type" value="mRNA"/>
</dbReference>
<dbReference type="EMBL" id="M80491">
    <property type="protein sequence ID" value="AAA34099.1"/>
    <property type="molecule type" value="Genomic_DNA"/>
</dbReference>
<dbReference type="PDB" id="2O98">
    <property type="method" value="X-ray"/>
    <property type="resolution" value="2.70 A"/>
    <property type="chains" value="P/Q=905-956"/>
</dbReference>
<dbReference type="PDBsum" id="2O98"/>
<dbReference type="SMR" id="Q08436"/>
<dbReference type="EvolutionaryTrace" id="Q08436"/>
<dbReference type="GO" id="GO:0005886">
    <property type="term" value="C:plasma membrane"/>
    <property type="evidence" value="ECO:0007669"/>
    <property type="project" value="UniProtKB-SubCell"/>
</dbReference>
<dbReference type="GO" id="GO:0005524">
    <property type="term" value="F:ATP binding"/>
    <property type="evidence" value="ECO:0007669"/>
    <property type="project" value="UniProtKB-KW"/>
</dbReference>
<dbReference type="GO" id="GO:0016887">
    <property type="term" value="F:ATP hydrolysis activity"/>
    <property type="evidence" value="ECO:0007669"/>
    <property type="project" value="InterPro"/>
</dbReference>
<dbReference type="GO" id="GO:0046872">
    <property type="term" value="F:metal ion binding"/>
    <property type="evidence" value="ECO:0007669"/>
    <property type="project" value="UniProtKB-KW"/>
</dbReference>
<dbReference type="GO" id="GO:0008553">
    <property type="term" value="F:P-type proton-exporting transporter activity"/>
    <property type="evidence" value="ECO:0007669"/>
    <property type="project" value="UniProtKB-EC"/>
</dbReference>
<dbReference type="GO" id="GO:0120029">
    <property type="term" value="P:proton export across plasma membrane"/>
    <property type="evidence" value="ECO:0007669"/>
    <property type="project" value="InterPro"/>
</dbReference>
<dbReference type="CDD" id="cd02076">
    <property type="entry name" value="P-type_ATPase_H"/>
    <property type="match status" value="1"/>
</dbReference>
<dbReference type="FunFam" id="1.20.1110.10:FF:000045">
    <property type="entry name" value="ATPase 4 plasma membrane-type"/>
    <property type="match status" value="1"/>
</dbReference>
<dbReference type="FunFam" id="2.70.150.10:FF:000004">
    <property type="entry name" value="Plasma membrane ATPase"/>
    <property type="match status" value="1"/>
</dbReference>
<dbReference type="FunFam" id="3.40.1110.10:FF:000004">
    <property type="entry name" value="Plasma membrane ATPase"/>
    <property type="match status" value="1"/>
</dbReference>
<dbReference type="FunFam" id="3.40.50.1000:FF:000211">
    <property type="entry name" value="Plasma membrane ATPase"/>
    <property type="match status" value="1"/>
</dbReference>
<dbReference type="Gene3D" id="6.10.140.890">
    <property type="match status" value="1"/>
</dbReference>
<dbReference type="Gene3D" id="3.40.1110.10">
    <property type="entry name" value="Calcium-transporting ATPase, cytoplasmic domain N"/>
    <property type="match status" value="1"/>
</dbReference>
<dbReference type="Gene3D" id="2.70.150.10">
    <property type="entry name" value="Calcium-transporting ATPase, cytoplasmic transduction domain A"/>
    <property type="match status" value="1"/>
</dbReference>
<dbReference type="Gene3D" id="1.20.1110.10">
    <property type="entry name" value="Calcium-transporting ATPase, transmembrane domain"/>
    <property type="match status" value="1"/>
</dbReference>
<dbReference type="Gene3D" id="3.40.50.1000">
    <property type="entry name" value="HAD superfamily/HAD-like"/>
    <property type="match status" value="1"/>
</dbReference>
<dbReference type="InterPro" id="IPR004014">
    <property type="entry name" value="ATPase_P-typ_cation-transptr_N"/>
</dbReference>
<dbReference type="InterPro" id="IPR023299">
    <property type="entry name" value="ATPase_P-typ_cyto_dom_N"/>
</dbReference>
<dbReference type="InterPro" id="IPR018303">
    <property type="entry name" value="ATPase_P-typ_P_site"/>
</dbReference>
<dbReference type="InterPro" id="IPR023298">
    <property type="entry name" value="ATPase_P-typ_TM_dom_sf"/>
</dbReference>
<dbReference type="InterPro" id="IPR008250">
    <property type="entry name" value="ATPase_P-typ_transduc_dom_A_sf"/>
</dbReference>
<dbReference type="InterPro" id="IPR036412">
    <property type="entry name" value="HAD-like_sf"/>
</dbReference>
<dbReference type="InterPro" id="IPR023214">
    <property type="entry name" value="HAD_sf"/>
</dbReference>
<dbReference type="InterPro" id="IPR006534">
    <property type="entry name" value="P-type_ATPase_IIIA"/>
</dbReference>
<dbReference type="InterPro" id="IPR001757">
    <property type="entry name" value="P_typ_ATPase"/>
</dbReference>
<dbReference type="InterPro" id="IPR044492">
    <property type="entry name" value="P_typ_ATPase_HD_dom"/>
</dbReference>
<dbReference type="NCBIfam" id="TIGR01647">
    <property type="entry name" value="ATPase-IIIA_H"/>
    <property type="match status" value="1"/>
</dbReference>
<dbReference type="NCBIfam" id="TIGR01494">
    <property type="entry name" value="ATPase_P-type"/>
    <property type="match status" value="2"/>
</dbReference>
<dbReference type="PANTHER" id="PTHR42861">
    <property type="entry name" value="CALCIUM-TRANSPORTING ATPASE"/>
    <property type="match status" value="1"/>
</dbReference>
<dbReference type="Pfam" id="PF00690">
    <property type="entry name" value="Cation_ATPase_N"/>
    <property type="match status" value="1"/>
</dbReference>
<dbReference type="Pfam" id="PF00122">
    <property type="entry name" value="E1-E2_ATPase"/>
    <property type="match status" value="1"/>
</dbReference>
<dbReference type="Pfam" id="PF00702">
    <property type="entry name" value="Hydrolase"/>
    <property type="match status" value="1"/>
</dbReference>
<dbReference type="PRINTS" id="PR00119">
    <property type="entry name" value="CATATPASE"/>
</dbReference>
<dbReference type="PRINTS" id="PR00120">
    <property type="entry name" value="HATPASE"/>
</dbReference>
<dbReference type="SFLD" id="SFLDG00002">
    <property type="entry name" value="C1.7:_P-type_atpase_like"/>
    <property type="match status" value="1"/>
</dbReference>
<dbReference type="SFLD" id="SFLDF00027">
    <property type="entry name" value="p-type_atpase"/>
    <property type="match status" value="1"/>
</dbReference>
<dbReference type="SMART" id="SM00831">
    <property type="entry name" value="Cation_ATPase_N"/>
    <property type="match status" value="1"/>
</dbReference>
<dbReference type="SUPFAM" id="SSF81653">
    <property type="entry name" value="Calcium ATPase, transduction domain A"/>
    <property type="match status" value="1"/>
</dbReference>
<dbReference type="SUPFAM" id="SSF81665">
    <property type="entry name" value="Calcium ATPase, transmembrane domain M"/>
    <property type="match status" value="1"/>
</dbReference>
<dbReference type="SUPFAM" id="SSF56784">
    <property type="entry name" value="HAD-like"/>
    <property type="match status" value="1"/>
</dbReference>
<dbReference type="PROSITE" id="PS00154">
    <property type="entry name" value="ATPASE_E1_E2"/>
    <property type="match status" value="1"/>
</dbReference>
<name>PMA3_NICPL</name>
<proteinExistence type="evidence at protein level"/>
<accession>Q08436</accession>
<sequence>MGEKPEVLDAVLKETVDLENIPIEEVFENLRCTKEGLTATAAQERLSIFGYNKLEEKKESKFSKFLGFMWNPLSWVMEAAAIMAIALANGGGKPPDWQDFVGIITLLIINSTISFIEENNAGNAAAALMARLAPKAKVLRDGKWKEEDAAVLVPGDIISIKLGDIIPADARLLEGDPLKIDQSALTGESLPVTKGPGDGVYSGSTCKQGEIEAVVIATGVHTFFGKAAHLVDSTNQVGHFQKVLTAIGNFCICSIAVGMIIEIIVMYPIQHRKYRPGIDNLLVLLIGGIPIAMPTVLSVTMAIGSHRLAQQGAITKRMTAIEEMAGMDVLCSDKTGTLTLNKLTVDKYLIEVFARGVDADTVVLMAARASRTENQDAIDAAIVGMLADPKEARAGIREIHFLPFNPTDKRTALTYLDGEGKMHRVSKGAPEQILHLAHNKSDIERRVHAVIDKFAERGLRSLAVAYQEVPEGRKESAGGPWQFIALLPLFDPPRHDSAETIRRALNLGVNVKMITGDQLAIGKETGRRLGMGTNMYPSSALLGQTKDESISALPVDELIEKADGFAGVFPEHKYEIVKRLQARKHICGMTGDGVNDAPALKKADIGIAVDDATDAARSASDIVLTEPGLSVIISAVLTSRAIFQRMKNYTIYAVSITIRIVLGFMLLALIWQFDFPPFMVLIIAILNDGTIMTISKDRVKPSPLPDSWKLAEIFTTGVVLGGYLAMMTVIFFWAAYKTNFFPRVFGVSTLEKTATDDFRKLASAIYLQVSTISQALIFVTRSRSWSFMERPGLLLVVAFFIAQLVATLIAVYANWSFAAIEGIGWGWAGVIWLYNIVFYIPLDLXXFLIRYALSGKAWDLVIEQRIAFTRKKDFGKEQRELQWAHAQRTLHGLQVPDPKIFSETTNFNELNQLAEEAKRRAEIARLRELHTLKGHVESVVKLKGLDIETIQQAYTV</sequence>
<reference key="1">
    <citation type="journal article" date="1992" name="J. Biol. Chem.">
        <title>Differential expression within a three-gene subfamily encoding a plasma membrane H(+)-ATPase in Nicotiana plumbaginifolia.</title>
        <authorList>
            <person name="Perez C."/>
            <person name="Michelet B."/>
            <person name="Ferrant V."/>
            <person name="Bogaerts P."/>
            <person name="Boutry M."/>
        </authorList>
    </citation>
    <scope>NUCLEOTIDE SEQUENCE [GENOMIC DNA / MRNA]</scope>
    <source>
        <tissue>Root</tissue>
    </source>
</reference>
<keyword id="KW-0002">3D-structure</keyword>
<keyword id="KW-0067">ATP-binding</keyword>
<keyword id="KW-1003">Cell membrane</keyword>
<keyword id="KW-0375">Hydrogen ion transport</keyword>
<keyword id="KW-0406">Ion transport</keyword>
<keyword id="KW-0460">Magnesium</keyword>
<keyword id="KW-0472">Membrane</keyword>
<keyword id="KW-0479">Metal-binding</keyword>
<keyword id="KW-0547">Nucleotide-binding</keyword>
<keyword id="KW-0597">Phosphoprotein</keyword>
<keyword id="KW-1278">Translocase</keyword>
<keyword id="KW-0812">Transmembrane</keyword>
<keyword id="KW-1133">Transmembrane helix</keyword>
<keyword id="KW-0813">Transport</keyword>
<feature type="chain" id="PRO_0000046292" description="Plasma membrane ATPase 3">
    <location>
        <begin position="1"/>
        <end position="956"/>
    </location>
</feature>
<feature type="topological domain" description="Cytoplasmic" evidence="2">
    <location>
        <begin position="1"/>
        <end position="65"/>
    </location>
</feature>
<feature type="transmembrane region" description="Helical; Name=1" evidence="2">
    <location>
        <begin position="66"/>
        <end position="85"/>
    </location>
</feature>
<feature type="topological domain" description="Extracellular" evidence="2">
    <location>
        <begin position="86"/>
        <end position="97"/>
    </location>
</feature>
<feature type="transmembrane region" description="Helical; Name=2" evidence="2">
    <location>
        <begin position="98"/>
        <end position="118"/>
    </location>
</feature>
<feature type="topological domain" description="Cytoplasmic" evidence="2">
    <location>
        <begin position="119"/>
        <end position="247"/>
    </location>
</feature>
<feature type="transmembrane region" description="Helical; Name=3" evidence="2">
    <location>
        <begin position="248"/>
        <end position="268"/>
    </location>
</feature>
<feature type="topological domain" description="Extracellular" evidence="2">
    <location>
        <begin position="269"/>
        <end position="278"/>
    </location>
</feature>
<feature type="transmembrane region" description="Helical; Name=4" evidence="2">
    <location>
        <begin position="279"/>
        <end position="300"/>
    </location>
</feature>
<feature type="topological domain" description="Cytoplasmic" evidence="2">
    <location>
        <begin position="301"/>
        <end position="647"/>
    </location>
</feature>
<feature type="transmembrane region" description="Helical; Name=5" evidence="2">
    <location>
        <begin position="648"/>
        <end position="669"/>
    </location>
</feature>
<feature type="topological domain" description="Extracellular" evidence="2">
    <location>
        <begin position="670"/>
        <end position="674"/>
    </location>
</feature>
<feature type="transmembrane region" description="Helical; Name=6" evidence="2">
    <location>
        <begin position="675"/>
        <end position="697"/>
    </location>
</feature>
<feature type="topological domain" description="Cytoplasmic" evidence="2">
    <location>
        <begin position="698"/>
        <end position="713"/>
    </location>
</feature>
<feature type="transmembrane region" description="Helical; Name=7" evidence="2">
    <location>
        <begin position="714"/>
        <end position="734"/>
    </location>
</feature>
<feature type="topological domain" description="Extracellular" evidence="2">
    <location>
        <begin position="735"/>
        <end position="759"/>
    </location>
</feature>
<feature type="transmembrane region" description="Helical; Name=8" evidence="2">
    <location>
        <begin position="760"/>
        <end position="780"/>
    </location>
</feature>
<feature type="topological domain" description="Cytoplasmic" evidence="2">
    <location>
        <begin position="781"/>
        <end position="792"/>
    </location>
</feature>
<feature type="transmembrane region" description="Helical; Name=9" evidence="2">
    <location>
        <begin position="793"/>
        <end position="813"/>
    </location>
</feature>
<feature type="topological domain" description="Extracellular" evidence="2">
    <location>
        <begin position="814"/>
        <end position="822"/>
    </location>
</feature>
<feature type="transmembrane region" description="Helical; Name=10" evidence="2">
    <location>
        <begin position="823"/>
        <end position="843"/>
    </location>
</feature>
<feature type="topological domain" description="Cytoplasmic" evidence="2">
    <location>
        <begin position="844"/>
        <end position="956"/>
    </location>
</feature>
<feature type="active site" description="4-aspartylphosphate intermediate" evidence="1">
    <location>
        <position position="333"/>
    </location>
</feature>
<feature type="binding site" evidence="1">
    <location>
        <position position="592"/>
    </location>
    <ligand>
        <name>Mg(2+)</name>
        <dbReference type="ChEBI" id="CHEBI:18420"/>
    </ligand>
</feature>
<feature type="binding site" evidence="1">
    <location>
        <position position="596"/>
    </location>
    <ligand>
        <name>Mg(2+)</name>
        <dbReference type="ChEBI" id="CHEBI:18420"/>
    </ligand>
</feature>
<feature type="sequence variant">
    <original>S</original>
    <variation>L</variation>
    <location>
        <position position="63"/>
    </location>
</feature>
<feature type="helix" evidence="4">
    <location>
        <begin position="907"/>
        <end position="930"/>
    </location>
</feature>
<feature type="helix" evidence="4">
    <location>
        <begin position="932"/>
        <end position="943"/>
    </location>
</feature>
<protein>
    <recommendedName>
        <fullName>Plasma membrane ATPase 3</fullName>
        <ecNumber>7.1.2.1</ecNumber>
    </recommendedName>
    <alternativeName>
        <fullName>Proton pump 3</fullName>
    </alternativeName>
</protein>
<comment type="function">
    <text>The plasma membrane ATPase of plants and fungi is a hydrogen ion pump. The proton gradient it generates drives the active transport of nutrients by H(+)-symport. The resulting external acidification and/or internal alkinization may mediate growth responses.</text>
</comment>
<comment type="catalytic activity">
    <reaction>
        <text>ATP + H2O + H(+)(in) = ADP + phosphate + 2 H(+)(out)</text>
        <dbReference type="Rhea" id="RHEA:20852"/>
        <dbReference type="ChEBI" id="CHEBI:15377"/>
        <dbReference type="ChEBI" id="CHEBI:15378"/>
        <dbReference type="ChEBI" id="CHEBI:30616"/>
        <dbReference type="ChEBI" id="CHEBI:43474"/>
        <dbReference type="ChEBI" id="CHEBI:456216"/>
        <dbReference type="EC" id="7.1.2.1"/>
    </reaction>
</comment>
<comment type="subcellular location">
    <subcellularLocation>
        <location>Cell membrane</location>
        <topology>Multi-pass membrane protein</topology>
    </subcellularLocation>
</comment>
<comment type="tissue specificity">
    <text>Expressed in roots, stems, leaves from both vegetative and flowering plants, and flowers at early and late stages of development with highest expression levels found in flowers and root tissue.</text>
</comment>
<comment type="similarity">
    <text evidence="3">Belongs to the cation transport ATPase (P-type) (TC 3.A.3) family. Type IIIA subfamily.</text>
</comment>